<evidence type="ECO:0000255" key="1">
    <source>
        <dbReference type="HAMAP-Rule" id="MF_01309"/>
    </source>
</evidence>
<evidence type="ECO:0000256" key="2">
    <source>
        <dbReference type="SAM" id="MobiDB-lite"/>
    </source>
</evidence>
<evidence type="ECO:0000305" key="3"/>
<feature type="chain" id="PRO_0000130108" description="Small ribosomal subunit protein uS3">
    <location>
        <begin position="1"/>
        <end position="248"/>
    </location>
</feature>
<feature type="domain" description="KH type-2" evidence="1">
    <location>
        <begin position="38"/>
        <end position="106"/>
    </location>
</feature>
<feature type="region of interest" description="Disordered" evidence="2">
    <location>
        <begin position="214"/>
        <end position="248"/>
    </location>
</feature>
<feature type="compositionally biased region" description="Basic and acidic residues" evidence="2">
    <location>
        <begin position="214"/>
        <end position="230"/>
    </location>
</feature>
<accession>Q8NT01</accession>
<dbReference type="EMBL" id="BA000036">
    <property type="protein sequence ID" value="BAB97907.1"/>
    <property type="molecule type" value="Genomic_DNA"/>
</dbReference>
<dbReference type="EMBL" id="BX927149">
    <property type="protein sequence ID" value="CAF19223.1"/>
    <property type="molecule type" value="Genomic_DNA"/>
</dbReference>
<dbReference type="RefSeq" id="NP_599754.1">
    <property type="nucleotide sequence ID" value="NC_003450.3"/>
</dbReference>
<dbReference type="RefSeq" id="WP_003854298.1">
    <property type="nucleotide sequence ID" value="NC_006958.1"/>
</dbReference>
<dbReference type="SMR" id="Q8NT01"/>
<dbReference type="STRING" id="196627.cg0601"/>
<dbReference type="GeneID" id="1021517"/>
<dbReference type="KEGG" id="cgb:cg0601"/>
<dbReference type="KEGG" id="cgl:Cgl0514"/>
<dbReference type="PATRIC" id="fig|196627.13.peg.509"/>
<dbReference type="eggNOG" id="COG0092">
    <property type="taxonomic scope" value="Bacteria"/>
</dbReference>
<dbReference type="HOGENOM" id="CLU_058591_0_0_11"/>
<dbReference type="OrthoDB" id="9806396at2"/>
<dbReference type="BioCyc" id="CORYNE:G18NG-10076-MONOMER"/>
<dbReference type="Proteomes" id="UP000000582">
    <property type="component" value="Chromosome"/>
</dbReference>
<dbReference type="Proteomes" id="UP000001009">
    <property type="component" value="Chromosome"/>
</dbReference>
<dbReference type="GO" id="GO:0022627">
    <property type="term" value="C:cytosolic small ribosomal subunit"/>
    <property type="evidence" value="ECO:0007669"/>
    <property type="project" value="TreeGrafter"/>
</dbReference>
<dbReference type="GO" id="GO:0003729">
    <property type="term" value="F:mRNA binding"/>
    <property type="evidence" value="ECO:0007669"/>
    <property type="project" value="UniProtKB-UniRule"/>
</dbReference>
<dbReference type="GO" id="GO:0019843">
    <property type="term" value="F:rRNA binding"/>
    <property type="evidence" value="ECO:0007669"/>
    <property type="project" value="UniProtKB-UniRule"/>
</dbReference>
<dbReference type="GO" id="GO:0003735">
    <property type="term" value="F:structural constituent of ribosome"/>
    <property type="evidence" value="ECO:0007669"/>
    <property type="project" value="InterPro"/>
</dbReference>
<dbReference type="GO" id="GO:0006412">
    <property type="term" value="P:translation"/>
    <property type="evidence" value="ECO:0007669"/>
    <property type="project" value="UniProtKB-UniRule"/>
</dbReference>
<dbReference type="CDD" id="cd02412">
    <property type="entry name" value="KH-II_30S_S3"/>
    <property type="match status" value="1"/>
</dbReference>
<dbReference type="FunFam" id="3.30.1140.32:FF:000002">
    <property type="entry name" value="30S ribosomal protein S3"/>
    <property type="match status" value="1"/>
</dbReference>
<dbReference type="FunFam" id="3.30.300.20:FF:000001">
    <property type="entry name" value="30S ribosomal protein S3"/>
    <property type="match status" value="1"/>
</dbReference>
<dbReference type="Gene3D" id="3.30.300.20">
    <property type="match status" value="1"/>
</dbReference>
<dbReference type="Gene3D" id="3.30.1140.32">
    <property type="entry name" value="Ribosomal protein S3, C-terminal domain"/>
    <property type="match status" value="1"/>
</dbReference>
<dbReference type="HAMAP" id="MF_01309_B">
    <property type="entry name" value="Ribosomal_uS3_B"/>
    <property type="match status" value="1"/>
</dbReference>
<dbReference type="InterPro" id="IPR004087">
    <property type="entry name" value="KH_dom"/>
</dbReference>
<dbReference type="InterPro" id="IPR015946">
    <property type="entry name" value="KH_dom-like_a/b"/>
</dbReference>
<dbReference type="InterPro" id="IPR004044">
    <property type="entry name" value="KH_dom_type_2"/>
</dbReference>
<dbReference type="InterPro" id="IPR009019">
    <property type="entry name" value="KH_sf_prok-type"/>
</dbReference>
<dbReference type="InterPro" id="IPR036419">
    <property type="entry name" value="Ribosomal_S3_C_sf"/>
</dbReference>
<dbReference type="InterPro" id="IPR005704">
    <property type="entry name" value="Ribosomal_uS3_bac-typ"/>
</dbReference>
<dbReference type="InterPro" id="IPR001351">
    <property type="entry name" value="Ribosomal_uS3_C"/>
</dbReference>
<dbReference type="InterPro" id="IPR018280">
    <property type="entry name" value="Ribosomal_uS3_CS"/>
</dbReference>
<dbReference type="NCBIfam" id="TIGR01009">
    <property type="entry name" value="rpsC_bact"/>
    <property type="match status" value="1"/>
</dbReference>
<dbReference type="PANTHER" id="PTHR11760">
    <property type="entry name" value="30S/40S RIBOSOMAL PROTEIN S3"/>
    <property type="match status" value="1"/>
</dbReference>
<dbReference type="PANTHER" id="PTHR11760:SF19">
    <property type="entry name" value="SMALL RIBOSOMAL SUBUNIT PROTEIN US3C"/>
    <property type="match status" value="1"/>
</dbReference>
<dbReference type="Pfam" id="PF07650">
    <property type="entry name" value="KH_2"/>
    <property type="match status" value="1"/>
</dbReference>
<dbReference type="Pfam" id="PF00189">
    <property type="entry name" value="Ribosomal_S3_C"/>
    <property type="match status" value="1"/>
</dbReference>
<dbReference type="SMART" id="SM00322">
    <property type="entry name" value="KH"/>
    <property type="match status" value="1"/>
</dbReference>
<dbReference type="SUPFAM" id="SSF54814">
    <property type="entry name" value="Prokaryotic type KH domain (KH-domain type II)"/>
    <property type="match status" value="1"/>
</dbReference>
<dbReference type="SUPFAM" id="SSF54821">
    <property type="entry name" value="Ribosomal protein S3 C-terminal domain"/>
    <property type="match status" value="1"/>
</dbReference>
<dbReference type="PROSITE" id="PS50823">
    <property type="entry name" value="KH_TYPE_2"/>
    <property type="match status" value="1"/>
</dbReference>
<dbReference type="PROSITE" id="PS00548">
    <property type="entry name" value="RIBOSOMAL_S3"/>
    <property type="match status" value="1"/>
</dbReference>
<gene>
    <name evidence="1" type="primary">rpsC</name>
    <name type="ordered locus">Cgl0514</name>
    <name type="ordered locus">cg0601</name>
</gene>
<protein>
    <recommendedName>
        <fullName evidence="1">Small ribosomal subunit protein uS3</fullName>
    </recommendedName>
    <alternativeName>
        <fullName evidence="3">30S ribosomal protein S3</fullName>
    </alternativeName>
</protein>
<name>RS3_CORGL</name>
<keyword id="KW-1185">Reference proteome</keyword>
<keyword id="KW-0687">Ribonucleoprotein</keyword>
<keyword id="KW-0689">Ribosomal protein</keyword>
<keyword id="KW-0694">RNA-binding</keyword>
<keyword id="KW-0699">rRNA-binding</keyword>
<sequence>MGQKIHPHGLRLGITSDWKSHWYADKSYADYVAEDIKIREFLSKGLDRAGIADVVIERTRDRVRVDIHTARPGIVIGRRGAEADRIRRELEKLTGKQVALNILEVKNVDANAKLVAQSIAEQLTNRVAFRRAMRKAIQSAMRQPQVKGIKVVCSGRLGGAEMSRTERYHEGRVPLHTLRAEIDYGTYEAHTTFGRIGVKVWIYKGDVVGGRRESEINAPAERRGRGDRNARPRRGGQRRQRAEQKQEG</sequence>
<organism>
    <name type="scientific">Corynebacterium glutamicum (strain ATCC 13032 / DSM 20300 / JCM 1318 / BCRC 11384 / CCUG 27702 / LMG 3730 / NBRC 12168 / NCIMB 10025 / NRRL B-2784 / 534)</name>
    <dbReference type="NCBI Taxonomy" id="196627"/>
    <lineage>
        <taxon>Bacteria</taxon>
        <taxon>Bacillati</taxon>
        <taxon>Actinomycetota</taxon>
        <taxon>Actinomycetes</taxon>
        <taxon>Mycobacteriales</taxon>
        <taxon>Corynebacteriaceae</taxon>
        <taxon>Corynebacterium</taxon>
    </lineage>
</organism>
<proteinExistence type="inferred from homology"/>
<reference key="1">
    <citation type="journal article" date="2003" name="Appl. Microbiol. Biotechnol.">
        <title>The Corynebacterium glutamicum genome: features and impacts on biotechnological processes.</title>
        <authorList>
            <person name="Ikeda M."/>
            <person name="Nakagawa S."/>
        </authorList>
    </citation>
    <scope>NUCLEOTIDE SEQUENCE [LARGE SCALE GENOMIC DNA]</scope>
    <source>
        <strain>ATCC 13032 / DSM 20300 / JCM 1318 / BCRC 11384 / CCUG 27702 / LMG 3730 / NBRC 12168 / NCIMB 10025 / NRRL B-2784 / 534</strain>
    </source>
</reference>
<reference key="2">
    <citation type="journal article" date="2003" name="J. Biotechnol.">
        <title>The complete Corynebacterium glutamicum ATCC 13032 genome sequence and its impact on the production of L-aspartate-derived amino acids and vitamins.</title>
        <authorList>
            <person name="Kalinowski J."/>
            <person name="Bathe B."/>
            <person name="Bartels D."/>
            <person name="Bischoff N."/>
            <person name="Bott M."/>
            <person name="Burkovski A."/>
            <person name="Dusch N."/>
            <person name="Eggeling L."/>
            <person name="Eikmanns B.J."/>
            <person name="Gaigalat L."/>
            <person name="Goesmann A."/>
            <person name="Hartmann M."/>
            <person name="Huthmacher K."/>
            <person name="Kraemer R."/>
            <person name="Linke B."/>
            <person name="McHardy A.C."/>
            <person name="Meyer F."/>
            <person name="Moeckel B."/>
            <person name="Pfefferle W."/>
            <person name="Puehler A."/>
            <person name="Rey D.A."/>
            <person name="Rueckert C."/>
            <person name="Rupp O."/>
            <person name="Sahm H."/>
            <person name="Wendisch V.F."/>
            <person name="Wiegraebe I."/>
            <person name="Tauch A."/>
        </authorList>
    </citation>
    <scope>NUCLEOTIDE SEQUENCE [LARGE SCALE GENOMIC DNA]</scope>
    <source>
        <strain>ATCC 13032 / DSM 20300 / JCM 1318 / BCRC 11384 / CCUG 27702 / LMG 3730 / NBRC 12168 / NCIMB 10025 / NRRL B-2784 / 534</strain>
    </source>
</reference>
<comment type="function">
    <text evidence="1">Binds the lower part of the 30S subunit head. Binds mRNA in the 70S ribosome, positioning it for translation.</text>
</comment>
<comment type="subunit">
    <text evidence="1">Part of the 30S ribosomal subunit. Forms a tight complex with proteins S10 and S14.</text>
</comment>
<comment type="similarity">
    <text evidence="1">Belongs to the universal ribosomal protein uS3 family.</text>
</comment>